<accession>Q8XIT0</accession>
<dbReference type="EMBL" id="BA000016">
    <property type="protein sequence ID" value="BAB81740.1"/>
    <property type="molecule type" value="Genomic_DNA"/>
</dbReference>
<dbReference type="RefSeq" id="WP_003455172.1">
    <property type="nucleotide sequence ID" value="NC_003366.1"/>
</dbReference>
<dbReference type="SMR" id="Q8XIT0"/>
<dbReference type="STRING" id="195102.gene:10491304"/>
<dbReference type="KEGG" id="cpe:CPE2034"/>
<dbReference type="HOGENOM" id="CLU_057217_5_0_9"/>
<dbReference type="Proteomes" id="UP000000818">
    <property type="component" value="Chromosome"/>
</dbReference>
<dbReference type="GO" id="GO:0005737">
    <property type="term" value="C:cytoplasm"/>
    <property type="evidence" value="ECO:0007669"/>
    <property type="project" value="UniProtKB-SubCell"/>
</dbReference>
<dbReference type="GO" id="GO:0000774">
    <property type="term" value="F:adenyl-nucleotide exchange factor activity"/>
    <property type="evidence" value="ECO:0007669"/>
    <property type="project" value="InterPro"/>
</dbReference>
<dbReference type="GO" id="GO:0042803">
    <property type="term" value="F:protein homodimerization activity"/>
    <property type="evidence" value="ECO:0007669"/>
    <property type="project" value="InterPro"/>
</dbReference>
<dbReference type="GO" id="GO:0051087">
    <property type="term" value="F:protein-folding chaperone binding"/>
    <property type="evidence" value="ECO:0007669"/>
    <property type="project" value="InterPro"/>
</dbReference>
<dbReference type="GO" id="GO:0051082">
    <property type="term" value="F:unfolded protein binding"/>
    <property type="evidence" value="ECO:0007669"/>
    <property type="project" value="TreeGrafter"/>
</dbReference>
<dbReference type="GO" id="GO:0006457">
    <property type="term" value="P:protein folding"/>
    <property type="evidence" value="ECO:0007669"/>
    <property type="project" value="InterPro"/>
</dbReference>
<dbReference type="CDD" id="cd00446">
    <property type="entry name" value="GrpE"/>
    <property type="match status" value="1"/>
</dbReference>
<dbReference type="FunFam" id="2.30.22.10:FF:000001">
    <property type="entry name" value="Protein GrpE"/>
    <property type="match status" value="1"/>
</dbReference>
<dbReference type="Gene3D" id="3.90.20.20">
    <property type="match status" value="1"/>
</dbReference>
<dbReference type="Gene3D" id="2.30.22.10">
    <property type="entry name" value="Head domain of nucleotide exchange factor GrpE"/>
    <property type="match status" value="1"/>
</dbReference>
<dbReference type="HAMAP" id="MF_01151">
    <property type="entry name" value="GrpE"/>
    <property type="match status" value="1"/>
</dbReference>
<dbReference type="InterPro" id="IPR000740">
    <property type="entry name" value="GrpE"/>
</dbReference>
<dbReference type="InterPro" id="IPR013805">
    <property type="entry name" value="GrpE_coiled_coil"/>
</dbReference>
<dbReference type="InterPro" id="IPR009012">
    <property type="entry name" value="GrpE_head"/>
</dbReference>
<dbReference type="NCBIfam" id="NF010738">
    <property type="entry name" value="PRK14140.1"/>
    <property type="match status" value="1"/>
</dbReference>
<dbReference type="NCBIfam" id="NF010757">
    <property type="entry name" value="PRK14160.1"/>
    <property type="match status" value="1"/>
</dbReference>
<dbReference type="PANTHER" id="PTHR21237">
    <property type="entry name" value="GRPE PROTEIN"/>
    <property type="match status" value="1"/>
</dbReference>
<dbReference type="PANTHER" id="PTHR21237:SF23">
    <property type="entry name" value="GRPE PROTEIN HOMOLOG, MITOCHONDRIAL"/>
    <property type="match status" value="1"/>
</dbReference>
<dbReference type="Pfam" id="PF01025">
    <property type="entry name" value="GrpE"/>
    <property type="match status" value="1"/>
</dbReference>
<dbReference type="PRINTS" id="PR00773">
    <property type="entry name" value="GRPEPROTEIN"/>
</dbReference>
<dbReference type="SUPFAM" id="SSF58014">
    <property type="entry name" value="Coiled-coil domain of nucleotide exchange factor GrpE"/>
    <property type="match status" value="1"/>
</dbReference>
<dbReference type="SUPFAM" id="SSF51064">
    <property type="entry name" value="Head domain of nucleotide exchange factor GrpE"/>
    <property type="match status" value="1"/>
</dbReference>
<dbReference type="PROSITE" id="PS01071">
    <property type="entry name" value="GRPE"/>
    <property type="match status" value="1"/>
</dbReference>
<gene>
    <name evidence="1" type="primary">grpE</name>
    <name type="ordered locus">CPE2034</name>
</gene>
<reference key="1">
    <citation type="journal article" date="2002" name="Proc. Natl. Acad. Sci. U.S.A.">
        <title>Complete genome sequence of Clostridium perfringens, an anaerobic flesh-eater.</title>
        <authorList>
            <person name="Shimizu T."/>
            <person name="Ohtani K."/>
            <person name="Hirakawa H."/>
            <person name="Ohshima K."/>
            <person name="Yamashita A."/>
            <person name="Shiba T."/>
            <person name="Ogasawara N."/>
            <person name="Hattori M."/>
            <person name="Kuhara S."/>
            <person name="Hayashi H."/>
        </authorList>
    </citation>
    <scope>NUCLEOTIDE SEQUENCE [LARGE SCALE GENOMIC DNA]</scope>
    <source>
        <strain>13 / Type A</strain>
    </source>
</reference>
<proteinExistence type="inferred from homology"/>
<evidence type="ECO:0000255" key="1">
    <source>
        <dbReference type="HAMAP-Rule" id="MF_01151"/>
    </source>
</evidence>
<evidence type="ECO:0000256" key="2">
    <source>
        <dbReference type="SAM" id="MobiDB-lite"/>
    </source>
</evidence>
<sequence length="208" mass="24201">MVDNKDFNEELKENIQEELDNETKAENPNIDEEVEEVSEDIKADEKVIDFEELQALKEENTMFKSKTKKLENELEALKDRLLRISAEYENYRKRTDKEKERIYTDACEDVLIKMLPVLDNLERALAVDGTVEDLKKGVEMTVRQFEDALEKLQVEEISTENGFDPELHQAMMVVEQEGAEPNQVAQVFQKGYKRGDKVIRHSMVTVTK</sequence>
<comment type="function">
    <text evidence="1">Participates actively in the response to hyperosmotic and heat shock by preventing the aggregation of stress-denatured proteins, in association with DnaK and GrpE. It is the nucleotide exchange factor for DnaK and may function as a thermosensor. Unfolded proteins bind initially to DnaJ; upon interaction with the DnaJ-bound protein, DnaK hydrolyzes its bound ATP, resulting in the formation of a stable complex. GrpE releases ADP from DnaK; ATP binding to DnaK triggers the release of the substrate protein, thus completing the reaction cycle. Several rounds of ATP-dependent interactions between DnaJ, DnaK and GrpE are required for fully efficient folding.</text>
</comment>
<comment type="subunit">
    <text evidence="1">Homodimer.</text>
</comment>
<comment type="subcellular location">
    <subcellularLocation>
        <location evidence="1">Cytoplasm</location>
    </subcellularLocation>
</comment>
<comment type="similarity">
    <text evidence="1">Belongs to the GrpE family.</text>
</comment>
<organism>
    <name type="scientific">Clostridium perfringens (strain 13 / Type A)</name>
    <dbReference type="NCBI Taxonomy" id="195102"/>
    <lineage>
        <taxon>Bacteria</taxon>
        <taxon>Bacillati</taxon>
        <taxon>Bacillota</taxon>
        <taxon>Clostridia</taxon>
        <taxon>Eubacteriales</taxon>
        <taxon>Clostridiaceae</taxon>
        <taxon>Clostridium</taxon>
    </lineage>
</organism>
<name>GRPE_CLOPE</name>
<keyword id="KW-0143">Chaperone</keyword>
<keyword id="KW-0963">Cytoplasm</keyword>
<keyword id="KW-1185">Reference proteome</keyword>
<keyword id="KW-0346">Stress response</keyword>
<feature type="chain" id="PRO_0000113774" description="Protein GrpE">
    <location>
        <begin position="1"/>
        <end position="208"/>
    </location>
</feature>
<feature type="region of interest" description="Disordered" evidence="2">
    <location>
        <begin position="1"/>
        <end position="38"/>
    </location>
</feature>
<feature type="compositionally biased region" description="Basic and acidic residues" evidence="2">
    <location>
        <begin position="1"/>
        <end position="25"/>
    </location>
</feature>
<feature type="compositionally biased region" description="Acidic residues" evidence="2">
    <location>
        <begin position="29"/>
        <end position="38"/>
    </location>
</feature>
<protein>
    <recommendedName>
        <fullName evidence="1">Protein GrpE</fullName>
    </recommendedName>
    <alternativeName>
        <fullName evidence="1">HSP-70 cofactor</fullName>
    </alternativeName>
</protein>